<sequence>MGINTKSFVMGKHTITLETGRIARQAHGAVLVSMDDTQVLVTVVGSKKMHPGQDFFPLSVDYIEKTYAAGKIPGGFLKREARPSEKETLTSRLIDRPIRPLFPNGFMNEVQVLITVISANSEVDPDIISMLGVSAALSISGIPFNGPIGSARVGYSNGKYTLNPTYTELVDSDLDMVVAGTDKAILMVESEASELSEKIILDAIIYAHEQYQVAITNIAEFVTQVGVQKWDWEAPATNEVLLSNIKSQFGKQINEAYKIKEKLNRHVKVGEIKTAAIEALVNEDKNGNSIDEVSKYFNKVEKSTVRERILNNDPRIDGRDNETVRELKIETGVLENTHGSALFTRGETQALVVTTLGSKREAQLIEKLESSERQNDYFLLHYNFPPYCVGEIGRVGTTKRREIGHGRLVRRGIAACLPSIEEFPYTVRVVSEITESNGSSSMASICGASLSLMDAGVPIKAPVAGIAMGLVKEGDRFTILTDILGDEDHLGDMDFKVAGTSRGINALQMDIKIQGITREIMEIALKQAKEARLNILGQMNQVICEPNTSNKNTPKTAVIKIQTDKIRDLIGKGGETIKGIISTSSASVDVDDNGNVNIFSNDQKSFDTAMQMVKDVTTTPKIGKVYTGKVVKIVDFGAFINIKPNQDGLLHISEIAHERVDKVENHLKEGDEIDVKVLSLDRGRIKLSRKVLLEK</sequence>
<reference key="1">
    <citation type="journal article" date="2007" name="Science">
        <title>The Calyptogena magnifica chemoautotrophic symbiont genome.</title>
        <authorList>
            <person name="Newton I.L.G."/>
            <person name="Woyke T."/>
            <person name="Auchtung T.A."/>
            <person name="Dilly G.F."/>
            <person name="Dutton R.J."/>
            <person name="Fisher M.C."/>
            <person name="Fontanez K.M."/>
            <person name="Lau E."/>
            <person name="Stewart F.J."/>
            <person name="Richardson P.M."/>
            <person name="Barry K.W."/>
            <person name="Saunders E."/>
            <person name="Detter J.C."/>
            <person name="Wu D."/>
            <person name="Eisen J.A."/>
            <person name="Cavanaugh C.M."/>
        </authorList>
    </citation>
    <scope>NUCLEOTIDE SEQUENCE [LARGE SCALE GENOMIC DNA]</scope>
</reference>
<dbReference type="EC" id="2.7.7.8" evidence="1"/>
<dbReference type="EMBL" id="CP000488">
    <property type="protein sequence ID" value="ABL02218.1"/>
    <property type="molecule type" value="Genomic_DNA"/>
</dbReference>
<dbReference type="RefSeq" id="WP_011737843.1">
    <property type="nucleotide sequence ID" value="NC_008610.1"/>
</dbReference>
<dbReference type="SMR" id="A1AWB1"/>
<dbReference type="STRING" id="413404.Rmag_0461"/>
<dbReference type="KEGG" id="rma:Rmag_0461"/>
<dbReference type="eggNOG" id="COG1185">
    <property type="taxonomic scope" value="Bacteria"/>
</dbReference>
<dbReference type="HOGENOM" id="CLU_004217_2_2_6"/>
<dbReference type="OrthoDB" id="9804305at2"/>
<dbReference type="Proteomes" id="UP000002587">
    <property type="component" value="Chromosome"/>
</dbReference>
<dbReference type="GO" id="GO:0005829">
    <property type="term" value="C:cytosol"/>
    <property type="evidence" value="ECO:0007669"/>
    <property type="project" value="TreeGrafter"/>
</dbReference>
<dbReference type="GO" id="GO:0000175">
    <property type="term" value="F:3'-5'-RNA exonuclease activity"/>
    <property type="evidence" value="ECO:0007669"/>
    <property type="project" value="TreeGrafter"/>
</dbReference>
<dbReference type="GO" id="GO:0000287">
    <property type="term" value="F:magnesium ion binding"/>
    <property type="evidence" value="ECO:0007669"/>
    <property type="project" value="UniProtKB-UniRule"/>
</dbReference>
<dbReference type="GO" id="GO:0004654">
    <property type="term" value="F:polyribonucleotide nucleotidyltransferase activity"/>
    <property type="evidence" value="ECO:0007669"/>
    <property type="project" value="UniProtKB-UniRule"/>
</dbReference>
<dbReference type="GO" id="GO:0003723">
    <property type="term" value="F:RNA binding"/>
    <property type="evidence" value="ECO:0007669"/>
    <property type="project" value="UniProtKB-UniRule"/>
</dbReference>
<dbReference type="GO" id="GO:0006402">
    <property type="term" value="P:mRNA catabolic process"/>
    <property type="evidence" value="ECO:0007669"/>
    <property type="project" value="UniProtKB-UniRule"/>
</dbReference>
<dbReference type="GO" id="GO:0006396">
    <property type="term" value="P:RNA processing"/>
    <property type="evidence" value="ECO:0007669"/>
    <property type="project" value="InterPro"/>
</dbReference>
<dbReference type="CDD" id="cd02393">
    <property type="entry name" value="KH-I_PNPase"/>
    <property type="match status" value="1"/>
</dbReference>
<dbReference type="CDD" id="cd11363">
    <property type="entry name" value="RNase_PH_PNPase_1"/>
    <property type="match status" value="1"/>
</dbReference>
<dbReference type="CDD" id="cd11364">
    <property type="entry name" value="RNase_PH_PNPase_2"/>
    <property type="match status" value="1"/>
</dbReference>
<dbReference type="CDD" id="cd04472">
    <property type="entry name" value="S1_PNPase"/>
    <property type="match status" value="1"/>
</dbReference>
<dbReference type="FunFam" id="3.30.1370.10:FF:000001">
    <property type="entry name" value="Polyribonucleotide nucleotidyltransferase"/>
    <property type="match status" value="1"/>
</dbReference>
<dbReference type="FunFam" id="3.30.230.70:FF:000001">
    <property type="entry name" value="Polyribonucleotide nucleotidyltransferase"/>
    <property type="match status" value="1"/>
</dbReference>
<dbReference type="FunFam" id="3.30.230.70:FF:000002">
    <property type="entry name" value="Polyribonucleotide nucleotidyltransferase"/>
    <property type="match status" value="1"/>
</dbReference>
<dbReference type="FunFam" id="2.40.50.140:FF:000189">
    <property type="entry name" value="Polyribonucleotide nucleotidyltransferase, putative"/>
    <property type="match status" value="1"/>
</dbReference>
<dbReference type="Gene3D" id="3.30.230.70">
    <property type="entry name" value="GHMP Kinase, N-terminal domain"/>
    <property type="match status" value="2"/>
</dbReference>
<dbReference type="Gene3D" id="3.30.1370.10">
    <property type="entry name" value="K Homology domain, type 1"/>
    <property type="match status" value="1"/>
</dbReference>
<dbReference type="Gene3D" id="2.40.50.140">
    <property type="entry name" value="Nucleic acid-binding proteins"/>
    <property type="match status" value="1"/>
</dbReference>
<dbReference type="HAMAP" id="MF_01595">
    <property type="entry name" value="PNPase"/>
    <property type="match status" value="1"/>
</dbReference>
<dbReference type="InterPro" id="IPR001247">
    <property type="entry name" value="ExoRNase_PH_dom1"/>
</dbReference>
<dbReference type="InterPro" id="IPR015847">
    <property type="entry name" value="ExoRNase_PH_dom2"/>
</dbReference>
<dbReference type="InterPro" id="IPR036345">
    <property type="entry name" value="ExoRNase_PH_dom2_sf"/>
</dbReference>
<dbReference type="InterPro" id="IPR004087">
    <property type="entry name" value="KH_dom"/>
</dbReference>
<dbReference type="InterPro" id="IPR004088">
    <property type="entry name" value="KH_dom_type_1"/>
</dbReference>
<dbReference type="InterPro" id="IPR036612">
    <property type="entry name" value="KH_dom_type_1_sf"/>
</dbReference>
<dbReference type="InterPro" id="IPR012340">
    <property type="entry name" value="NA-bd_OB-fold"/>
</dbReference>
<dbReference type="InterPro" id="IPR012162">
    <property type="entry name" value="PNPase"/>
</dbReference>
<dbReference type="InterPro" id="IPR027408">
    <property type="entry name" value="PNPase/RNase_PH_dom_sf"/>
</dbReference>
<dbReference type="InterPro" id="IPR015848">
    <property type="entry name" value="PNPase_PH_RNA-bd_bac/org-type"/>
</dbReference>
<dbReference type="InterPro" id="IPR020568">
    <property type="entry name" value="Ribosomal_Su5_D2-typ_SF"/>
</dbReference>
<dbReference type="InterPro" id="IPR003029">
    <property type="entry name" value="S1_domain"/>
</dbReference>
<dbReference type="NCBIfam" id="TIGR03591">
    <property type="entry name" value="polynuc_phos"/>
    <property type="match status" value="1"/>
</dbReference>
<dbReference type="NCBIfam" id="NF008805">
    <property type="entry name" value="PRK11824.1"/>
    <property type="match status" value="1"/>
</dbReference>
<dbReference type="PANTHER" id="PTHR11252">
    <property type="entry name" value="POLYRIBONUCLEOTIDE NUCLEOTIDYLTRANSFERASE"/>
    <property type="match status" value="1"/>
</dbReference>
<dbReference type="PANTHER" id="PTHR11252:SF0">
    <property type="entry name" value="POLYRIBONUCLEOTIDE NUCLEOTIDYLTRANSFERASE 1, MITOCHONDRIAL"/>
    <property type="match status" value="1"/>
</dbReference>
<dbReference type="Pfam" id="PF00013">
    <property type="entry name" value="KH_1"/>
    <property type="match status" value="1"/>
</dbReference>
<dbReference type="Pfam" id="PF03726">
    <property type="entry name" value="PNPase"/>
    <property type="match status" value="1"/>
</dbReference>
<dbReference type="Pfam" id="PF01138">
    <property type="entry name" value="RNase_PH"/>
    <property type="match status" value="2"/>
</dbReference>
<dbReference type="Pfam" id="PF03725">
    <property type="entry name" value="RNase_PH_C"/>
    <property type="match status" value="2"/>
</dbReference>
<dbReference type="Pfam" id="PF00575">
    <property type="entry name" value="S1"/>
    <property type="match status" value="1"/>
</dbReference>
<dbReference type="PIRSF" id="PIRSF005499">
    <property type="entry name" value="PNPase"/>
    <property type="match status" value="1"/>
</dbReference>
<dbReference type="SMART" id="SM00322">
    <property type="entry name" value="KH"/>
    <property type="match status" value="1"/>
</dbReference>
<dbReference type="SMART" id="SM00316">
    <property type="entry name" value="S1"/>
    <property type="match status" value="1"/>
</dbReference>
<dbReference type="SUPFAM" id="SSF54791">
    <property type="entry name" value="Eukaryotic type KH-domain (KH-domain type I)"/>
    <property type="match status" value="1"/>
</dbReference>
<dbReference type="SUPFAM" id="SSF50249">
    <property type="entry name" value="Nucleic acid-binding proteins"/>
    <property type="match status" value="1"/>
</dbReference>
<dbReference type="SUPFAM" id="SSF55666">
    <property type="entry name" value="Ribonuclease PH domain 2-like"/>
    <property type="match status" value="2"/>
</dbReference>
<dbReference type="SUPFAM" id="SSF54211">
    <property type="entry name" value="Ribosomal protein S5 domain 2-like"/>
    <property type="match status" value="2"/>
</dbReference>
<dbReference type="PROSITE" id="PS50084">
    <property type="entry name" value="KH_TYPE_1"/>
    <property type="match status" value="1"/>
</dbReference>
<dbReference type="PROSITE" id="PS50126">
    <property type="entry name" value="S1"/>
    <property type="match status" value="1"/>
</dbReference>
<feature type="chain" id="PRO_0000329823" description="Polyribonucleotide nucleotidyltransferase">
    <location>
        <begin position="1"/>
        <end position="695"/>
    </location>
</feature>
<feature type="domain" description="KH" evidence="1">
    <location>
        <begin position="554"/>
        <end position="613"/>
    </location>
</feature>
<feature type="domain" description="S1 motif" evidence="1">
    <location>
        <begin position="623"/>
        <end position="690"/>
    </location>
</feature>
<feature type="binding site" evidence="1">
    <location>
        <position position="488"/>
    </location>
    <ligand>
        <name>Mg(2+)</name>
        <dbReference type="ChEBI" id="CHEBI:18420"/>
    </ligand>
</feature>
<feature type="binding site" evidence="1">
    <location>
        <position position="494"/>
    </location>
    <ligand>
        <name>Mg(2+)</name>
        <dbReference type="ChEBI" id="CHEBI:18420"/>
    </ligand>
</feature>
<evidence type="ECO:0000255" key="1">
    <source>
        <dbReference type="HAMAP-Rule" id="MF_01595"/>
    </source>
</evidence>
<keyword id="KW-0963">Cytoplasm</keyword>
<keyword id="KW-0460">Magnesium</keyword>
<keyword id="KW-0479">Metal-binding</keyword>
<keyword id="KW-0548">Nucleotidyltransferase</keyword>
<keyword id="KW-0694">RNA-binding</keyword>
<keyword id="KW-0808">Transferase</keyword>
<organism>
    <name type="scientific">Ruthia magnifica subsp. Calyptogena magnifica</name>
    <dbReference type="NCBI Taxonomy" id="413404"/>
    <lineage>
        <taxon>Bacteria</taxon>
        <taxon>Pseudomonadati</taxon>
        <taxon>Pseudomonadota</taxon>
        <taxon>Gammaproteobacteria</taxon>
        <taxon>Candidatus Pseudothioglobaceae</taxon>
        <taxon>Candidatus Ruthturnera</taxon>
    </lineage>
</organism>
<gene>
    <name evidence="1" type="primary">pnp</name>
    <name type="ordered locus">Rmag_0461</name>
</gene>
<protein>
    <recommendedName>
        <fullName evidence="1">Polyribonucleotide nucleotidyltransferase</fullName>
        <ecNumber evidence="1">2.7.7.8</ecNumber>
    </recommendedName>
    <alternativeName>
        <fullName evidence="1">Polynucleotide phosphorylase</fullName>
        <shortName evidence="1">PNPase</shortName>
    </alternativeName>
</protein>
<proteinExistence type="inferred from homology"/>
<name>PNP_RUTMC</name>
<comment type="function">
    <text evidence="1">Involved in mRNA degradation. Catalyzes the phosphorolysis of single-stranded polyribonucleotides processively in the 3'- to 5'-direction.</text>
</comment>
<comment type="catalytic activity">
    <reaction evidence="1">
        <text>RNA(n+1) + phosphate = RNA(n) + a ribonucleoside 5'-diphosphate</text>
        <dbReference type="Rhea" id="RHEA:22096"/>
        <dbReference type="Rhea" id="RHEA-COMP:14527"/>
        <dbReference type="Rhea" id="RHEA-COMP:17342"/>
        <dbReference type="ChEBI" id="CHEBI:43474"/>
        <dbReference type="ChEBI" id="CHEBI:57930"/>
        <dbReference type="ChEBI" id="CHEBI:140395"/>
        <dbReference type="EC" id="2.7.7.8"/>
    </reaction>
</comment>
<comment type="cofactor">
    <cofactor evidence="1">
        <name>Mg(2+)</name>
        <dbReference type="ChEBI" id="CHEBI:18420"/>
    </cofactor>
</comment>
<comment type="subunit">
    <text evidence="1">Component of the RNA degradosome, which is a multiprotein complex involved in RNA processing and mRNA degradation.</text>
</comment>
<comment type="subcellular location">
    <subcellularLocation>
        <location evidence="1">Cytoplasm</location>
    </subcellularLocation>
</comment>
<comment type="similarity">
    <text evidence="1">Belongs to the polyribonucleotide nucleotidyltransferase family.</text>
</comment>
<accession>A1AWB1</accession>